<sequence length="479" mass="53426">MAQHAVYFPDAFLTQMREAMPSTLSFDEFISACQRPLRRSIRINTLKISVADFLALIAPYGWSLTPIPWCHEGFWIERDDEEALPLGSTAEHLSGLFYIQEASSMLPVAALFADDNHPQRVMDMAAAPGSKTTQIAARMGNRGAILANEFSASRVKVLHANISRCGIANTALTHFDGRVFGAALPEMFDAILLDAPCSGEGVVRKDPDALKNWSPESNLDIAATQRELLDSAFHALRPGGTLVYSTCTLNRQENEEVCLWLKETYADAVEFLPLDDLFPDADRALTPEGFLHVFPQIYDCEGFFVARLRKISSLPAMPAPGYKVGTFPFTPLKGREALHVTQAANAVGLLWDENLHLWQREKEVWLFPAEIESLIGKVRFSRLGIKLAESHNKGYRWQHEATIALACPTHAHAFELSAQEAEEWYRGRDIYPQTPPAADDVLVTFQRQPLGLAKRIGSRIKNSYPRELVRDGKLFTGNS</sequence>
<comment type="function">
    <text evidence="1">Specifically methylates the cytosine at position 1407 (m5C1407) of 16S rRNA.</text>
</comment>
<comment type="catalytic activity">
    <reaction evidence="1">
        <text>cytidine(1407) in 16S rRNA + S-adenosyl-L-methionine = 5-methylcytidine(1407) in 16S rRNA + S-adenosyl-L-homocysteine + H(+)</text>
        <dbReference type="Rhea" id="RHEA:42756"/>
        <dbReference type="Rhea" id="RHEA-COMP:10223"/>
        <dbReference type="Rhea" id="RHEA-COMP:10224"/>
        <dbReference type="ChEBI" id="CHEBI:15378"/>
        <dbReference type="ChEBI" id="CHEBI:57856"/>
        <dbReference type="ChEBI" id="CHEBI:59789"/>
        <dbReference type="ChEBI" id="CHEBI:74483"/>
        <dbReference type="ChEBI" id="CHEBI:82748"/>
        <dbReference type="EC" id="2.1.1.178"/>
    </reaction>
</comment>
<comment type="subcellular location">
    <subcellularLocation>
        <location evidence="1">Cytoplasm</location>
    </subcellularLocation>
</comment>
<comment type="similarity">
    <text evidence="1">Belongs to the class I-like SAM-binding methyltransferase superfamily. RsmB/NOP family.</text>
</comment>
<name>RSMF_SALA4</name>
<dbReference type="EC" id="2.1.1.178" evidence="1"/>
<dbReference type="EMBL" id="CP001138">
    <property type="protein sequence ID" value="ACH49918.1"/>
    <property type="molecule type" value="Genomic_DNA"/>
</dbReference>
<dbReference type="RefSeq" id="WP_001747693.1">
    <property type="nucleotide sequence ID" value="NC_011149.1"/>
</dbReference>
<dbReference type="SMR" id="B5F3P3"/>
<dbReference type="KEGG" id="sea:SeAg_B1281"/>
<dbReference type="HOGENOM" id="CLU_005316_6_2_6"/>
<dbReference type="Proteomes" id="UP000008819">
    <property type="component" value="Chromosome"/>
</dbReference>
<dbReference type="GO" id="GO:0005737">
    <property type="term" value="C:cytoplasm"/>
    <property type="evidence" value="ECO:0007669"/>
    <property type="project" value="UniProtKB-SubCell"/>
</dbReference>
<dbReference type="GO" id="GO:0003723">
    <property type="term" value="F:RNA binding"/>
    <property type="evidence" value="ECO:0007669"/>
    <property type="project" value="UniProtKB-KW"/>
</dbReference>
<dbReference type="GO" id="GO:0009383">
    <property type="term" value="F:rRNA (cytosine-C5-)-methyltransferase activity"/>
    <property type="evidence" value="ECO:0007669"/>
    <property type="project" value="TreeGrafter"/>
</dbReference>
<dbReference type="GO" id="GO:0070475">
    <property type="term" value="P:rRNA base methylation"/>
    <property type="evidence" value="ECO:0007669"/>
    <property type="project" value="TreeGrafter"/>
</dbReference>
<dbReference type="CDD" id="cd02440">
    <property type="entry name" value="AdoMet_MTases"/>
    <property type="match status" value="1"/>
</dbReference>
<dbReference type="FunFam" id="3.10.450.720:FF:000001">
    <property type="entry name" value="Ribosomal RNA small subunit methyltransferase F"/>
    <property type="match status" value="1"/>
</dbReference>
<dbReference type="FunFam" id="3.40.50.150:FF:000079">
    <property type="entry name" value="Ribosomal RNA small subunit methyltransferase F"/>
    <property type="match status" value="1"/>
</dbReference>
<dbReference type="Gene3D" id="3.10.450.720">
    <property type="match status" value="1"/>
</dbReference>
<dbReference type="Gene3D" id="3.40.50.150">
    <property type="entry name" value="Vaccinia Virus protein VP39"/>
    <property type="match status" value="1"/>
</dbReference>
<dbReference type="HAMAP" id="MF_01579">
    <property type="entry name" value="16SrRNA_methyltr_F"/>
    <property type="match status" value="1"/>
</dbReference>
<dbReference type="InterPro" id="IPR031341">
    <property type="entry name" value="Methyltr_RsmF_N"/>
</dbReference>
<dbReference type="InterPro" id="IPR049560">
    <property type="entry name" value="MeTrfase_RsmB-F_NOP2_cat"/>
</dbReference>
<dbReference type="InterPro" id="IPR001678">
    <property type="entry name" value="MeTrfase_RsmB-F_NOP2_dom"/>
</dbReference>
<dbReference type="InterPro" id="IPR027391">
    <property type="entry name" value="Nol1_Nop2_Fmu_2"/>
</dbReference>
<dbReference type="InterPro" id="IPR011023">
    <property type="entry name" value="Nop2p"/>
</dbReference>
<dbReference type="InterPro" id="IPR023267">
    <property type="entry name" value="RCMT"/>
</dbReference>
<dbReference type="InterPro" id="IPR023545">
    <property type="entry name" value="rRNA_ssu_MeTfrase_F"/>
</dbReference>
<dbReference type="InterPro" id="IPR018314">
    <property type="entry name" value="RsmB/NOL1/NOP2-like_CS"/>
</dbReference>
<dbReference type="InterPro" id="IPR029063">
    <property type="entry name" value="SAM-dependent_MTases_sf"/>
</dbReference>
<dbReference type="InterPro" id="IPR048457">
    <property type="entry name" value="YebU_pre-PUA_dom"/>
</dbReference>
<dbReference type="NCBIfam" id="TIGR00446">
    <property type="entry name" value="nop2p"/>
    <property type="match status" value="1"/>
</dbReference>
<dbReference type="NCBIfam" id="NF008898">
    <property type="entry name" value="PRK11933.1"/>
    <property type="match status" value="1"/>
</dbReference>
<dbReference type="PANTHER" id="PTHR22807:SF30">
    <property type="entry name" value="28S RRNA (CYTOSINE(4447)-C(5))-METHYLTRANSFERASE-RELATED"/>
    <property type="match status" value="1"/>
</dbReference>
<dbReference type="PANTHER" id="PTHR22807">
    <property type="entry name" value="NOP2 YEAST -RELATED NOL1/NOP2/FMU SUN DOMAIN-CONTAINING"/>
    <property type="match status" value="1"/>
</dbReference>
<dbReference type="Pfam" id="PF01189">
    <property type="entry name" value="Methyltr_RsmB-F"/>
    <property type="match status" value="1"/>
</dbReference>
<dbReference type="Pfam" id="PF17125">
    <property type="entry name" value="Methyltr_RsmF_N"/>
    <property type="match status" value="1"/>
</dbReference>
<dbReference type="Pfam" id="PF13636">
    <property type="entry name" value="Methyltranf_PUA"/>
    <property type="match status" value="1"/>
</dbReference>
<dbReference type="Pfam" id="PF21150">
    <property type="entry name" value="YebU_pre-PUA_dom"/>
    <property type="match status" value="1"/>
</dbReference>
<dbReference type="PRINTS" id="PR02008">
    <property type="entry name" value="RCMTFAMILY"/>
</dbReference>
<dbReference type="SUPFAM" id="SSF53335">
    <property type="entry name" value="S-adenosyl-L-methionine-dependent methyltransferases"/>
    <property type="match status" value="1"/>
</dbReference>
<dbReference type="PROSITE" id="PS01153">
    <property type="entry name" value="NOL1_NOP2_SUN"/>
    <property type="match status" value="1"/>
</dbReference>
<dbReference type="PROSITE" id="PS51686">
    <property type="entry name" value="SAM_MT_RSMB_NOP"/>
    <property type="match status" value="1"/>
</dbReference>
<feature type="chain" id="PRO_1000147572" description="Ribosomal RNA small subunit methyltransferase F">
    <location>
        <begin position="1"/>
        <end position="479"/>
    </location>
</feature>
<feature type="active site" description="Nucleophile" evidence="1">
    <location>
        <position position="247"/>
    </location>
</feature>
<feature type="binding site" evidence="1">
    <location>
        <begin position="125"/>
        <end position="131"/>
    </location>
    <ligand>
        <name>S-adenosyl-L-methionine</name>
        <dbReference type="ChEBI" id="CHEBI:59789"/>
    </ligand>
</feature>
<feature type="binding site" evidence="1">
    <location>
        <position position="149"/>
    </location>
    <ligand>
        <name>S-adenosyl-L-methionine</name>
        <dbReference type="ChEBI" id="CHEBI:59789"/>
    </ligand>
</feature>
<feature type="binding site" evidence="1">
    <location>
        <position position="176"/>
    </location>
    <ligand>
        <name>S-adenosyl-L-methionine</name>
        <dbReference type="ChEBI" id="CHEBI:59789"/>
    </ligand>
</feature>
<feature type="binding site" evidence="1">
    <location>
        <position position="194"/>
    </location>
    <ligand>
        <name>S-adenosyl-L-methionine</name>
        <dbReference type="ChEBI" id="CHEBI:59789"/>
    </ligand>
</feature>
<proteinExistence type="inferred from homology"/>
<reference key="1">
    <citation type="journal article" date="2011" name="J. Bacteriol.">
        <title>Comparative genomics of 28 Salmonella enterica isolates: evidence for CRISPR-mediated adaptive sublineage evolution.</title>
        <authorList>
            <person name="Fricke W.F."/>
            <person name="Mammel M.K."/>
            <person name="McDermott P.F."/>
            <person name="Tartera C."/>
            <person name="White D.G."/>
            <person name="Leclerc J.E."/>
            <person name="Ravel J."/>
            <person name="Cebula T.A."/>
        </authorList>
    </citation>
    <scope>NUCLEOTIDE SEQUENCE [LARGE SCALE GENOMIC DNA]</scope>
    <source>
        <strain>SL483</strain>
    </source>
</reference>
<organism>
    <name type="scientific">Salmonella agona (strain SL483)</name>
    <dbReference type="NCBI Taxonomy" id="454166"/>
    <lineage>
        <taxon>Bacteria</taxon>
        <taxon>Pseudomonadati</taxon>
        <taxon>Pseudomonadota</taxon>
        <taxon>Gammaproteobacteria</taxon>
        <taxon>Enterobacterales</taxon>
        <taxon>Enterobacteriaceae</taxon>
        <taxon>Salmonella</taxon>
    </lineage>
</organism>
<evidence type="ECO:0000255" key="1">
    <source>
        <dbReference type="HAMAP-Rule" id="MF_01579"/>
    </source>
</evidence>
<gene>
    <name evidence="1" type="primary">rsmF</name>
    <name type="ordered locus">SeAg_B1281</name>
</gene>
<keyword id="KW-0963">Cytoplasm</keyword>
<keyword id="KW-0489">Methyltransferase</keyword>
<keyword id="KW-0694">RNA-binding</keyword>
<keyword id="KW-0698">rRNA processing</keyword>
<keyword id="KW-0949">S-adenosyl-L-methionine</keyword>
<keyword id="KW-0808">Transferase</keyword>
<protein>
    <recommendedName>
        <fullName evidence="1">Ribosomal RNA small subunit methyltransferase F</fullName>
        <ecNumber evidence="1">2.1.1.178</ecNumber>
    </recommendedName>
    <alternativeName>
        <fullName evidence="1">16S rRNA m5C1407 methyltransferase</fullName>
    </alternativeName>
    <alternativeName>
        <fullName evidence="1">rRNA (cytosine-C(5)-)-methyltransferase RsmF</fullName>
    </alternativeName>
</protein>
<accession>B5F3P3</accession>